<accession>Q6GHZ5</accession>
<keyword id="KW-0240">DNA-directed RNA polymerase</keyword>
<keyword id="KW-0548">Nucleotidyltransferase</keyword>
<keyword id="KW-0804">Transcription</keyword>
<keyword id="KW-0808">Transferase</keyword>
<dbReference type="EC" id="2.7.7.6" evidence="1"/>
<dbReference type="EMBL" id="BX571856">
    <property type="protein sequence ID" value="CAG40066.1"/>
    <property type="molecule type" value="Genomic_DNA"/>
</dbReference>
<dbReference type="RefSeq" id="WP_000257888.1">
    <property type="nucleotide sequence ID" value="NC_002952.2"/>
</dbReference>
<dbReference type="SMR" id="Q6GHZ5"/>
<dbReference type="KEGG" id="sar:SAR1064"/>
<dbReference type="HOGENOM" id="CLU_187518_1_0_9"/>
<dbReference type="Proteomes" id="UP000000596">
    <property type="component" value="Chromosome"/>
</dbReference>
<dbReference type="GO" id="GO:0000428">
    <property type="term" value="C:DNA-directed RNA polymerase complex"/>
    <property type="evidence" value="ECO:0007669"/>
    <property type="project" value="UniProtKB-KW"/>
</dbReference>
<dbReference type="GO" id="GO:0003677">
    <property type="term" value="F:DNA binding"/>
    <property type="evidence" value="ECO:0007669"/>
    <property type="project" value="UniProtKB-UniRule"/>
</dbReference>
<dbReference type="GO" id="GO:0003899">
    <property type="term" value="F:DNA-directed RNA polymerase activity"/>
    <property type="evidence" value="ECO:0007669"/>
    <property type="project" value="UniProtKB-UniRule"/>
</dbReference>
<dbReference type="GO" id="GO:0006351">
    <property type="term" value="P:DNA-templated transcription"/>
    <property type="evidence" value="ECO:0007669"/>
    <property type="project" value="UniProtKB-UniRule"/>
</dbReference>
<dbReference type="Gene3D" id="3.10.20.730">
    <property type="entry name" value="RNAP, epsilon subunit-like"/>
    <property type="match status" value="1"/>
</dbReference>
<dbReference type="HAMAP" id="MF_01553">
    <property type="entry name" value="RNApol_bact_RpoY"/>
    <property type="match status" value="1"/>
</dbReference>
<dbReference type="InterPro" id="IPR009907">
    <property type="entry name" value="RpoY"/>
</dbReference>
<dbReference type="NCBIfam" id="NF010188">
    <property type="entry name" value="PRK13667.1"/>
    <property type="match status" value="1"/>
</dbReference>
<dbReference type="Pfam" id="PF07288">
    <property type="entry name" value="RpoY"/>
    <property type="match status" value="1"/>
</dbReference>
<comment type="function">
    <text evidence="1">A non-essential component of RNA polymerase (RNAP).</text>
</comment>
<comment type="catalytic activity">
    <reaction evidence="1">
        <text>RNA(n) + a ribonucleoside 5'-triphosphate = RNA(n+1) + diphosphate</text>
        <dbReference type="Rhea" id="RHEA:21248"/>
        <dbReference type="Rhea" id="RHEA-COMP:14527"/>
        <dbReference type="Rhea" id="RHEA-COMP:17342"/>
        <dbReference type="ChEBI" id="CHEBI:33019"/>
        <dbReference type="ChEBI" id="CHEBI:61557"/>
        <dbReference type="ChEBI" id="CHEBI:140395"/>
        <dbReference type="EC" id="2.7.7.6"/>
    </reaction>
</comment>
<comment type="subunit">
    <text evidence="1">RNAP is composed of a core of 2 alpha, a beta and a beta' subunit. The core is associated with a delta subunit, and at least one of epsilon or omega. When a sigma factor is associated with the core the holoenzyme is formed, which can initiate transcription.</text>
</comment>
<comment type="similarity">
    <text evidence="1">Belongs to the RNA polymerase subunit epsilon family.</text>
</comment>
<feature type="chain" id="PRO_0000163134" description="DNA-directed RNA polymerase subunit epsilon">
    <location>
        <begin position="1"/>
        <end position="72"/>
    </location>
</feature>
<reference key="1">
    <citation type="journal article" date="2004" name="Proc. Natl. Acad. Sci. U.S.A.">
        <title>Complete genomes of two clinical Staphylococcus aureus strains: evidence for the rapid evolution of virulence and drug resistance.</title>
        <authorList>
            <person name="Holden M.T.G."/>
            <person name="Feil E.J."/>
            <person name="Lindsay J.A."/>
            <person name="Peacock S.J."/>
            <person name="Day N.P.J."/>
            <person name="Enright M.C."/>
            <person name="Foster T.J."/>
            <person name="Moore C.E."/>
            <person name="Hurst L."/>
            <person name="Atkin R."/>
            <person name="Barron A."/>
            <person name="Bason N."/>
            <person name="Bentley S.D."/>
            <person name="Chillingworth C."/>
            <person name="Chillingworth T."/>
            <person name="Churcher C."/>
            <person name="Clark L."/>
            <person name="Corton C."/>
            <person name="Cronin A."/>
            <person name="Doggett J."/>
            <person name="Dowd L."/>
            <person name="Feltwell T."/>
            <person name="Hance Z."/>
            <person name="Harris B."/>
            <person name="Hauser H."/>
            <person name="Holroyd S."/>
            <person name="Jagels K."/>
            <person name="James K.D."/>
            <person name="Lennard N."/>
            <person name="Line A."/>
            <person name="Mayes R."/>
            <person name="Moule S."/>
            <person name="Mungall K."/>
            <person name="Ormond D."/>
            <person name="Quail M.A."/>
            <person name="Rabbinowitsch E."/>
            <person name="Rutherford K.M."/>
            <person name="Sanders M."/>
            <person name="Sharp S."/>
            <person name="Simmonds M."/>
            <person name="Stevens K."/>
            <person name="Whitehead S."/>
            <person name="Barrell B.G."/>
            <person name="Spratt B.G."/>
            <person name="Parkhill J."/>
        </authorList>
    </citation>
    <scope>NUCLEOTIDE SEQUENCE [LARGE SCALE GENOMIC DNA]</scope>
    <source>
        <strain>MRSA252</strain>
    </source>
</reference>
<protein>
    <recommendedName>
        <fullName evidence="1">DNA-directed RNA polymerase subunit epsilon</fullName>
        <shortName evidence="1">RNAP epsilon subunit</shortName>
        <ecNumber evidence="1">2.7.7.6</ecNumber>
    </recommendedName>
    <alternativeName>
        <fullName evidence="1">RNA polymerase epsilon subunit</fullName>
    </alternativeName>
    <alternativeName>
        <fullName evidence="1">Transcriptase subunit epsilon</fullName>
    </alternativeName>
</protein>
<name>RPOY_STAAR</name>
<evidence type="ECO:0000255" key="1">
    <source>
        <dbReference type="HAMAP-Rule" id="MF_01553"/>
    </source>
</evidence>
<proteinExistence type="inferred from homology"/>
<organism>
    <name type="scientific">Staphylococcus aureus (strain MRSA252)</name>
    <dbReference type="NCBI Taxonomy" id="282458"/>
    <lineage>
        <taxon>Bacteria</taxon>
        <taxon>Bacillati</taxon>
        <taxon>Bacillota</taxon>
        <taxon>Bacilli</taxon>
        <taxon>Bacillales</taxon>
        <taxon>Staphylococcaceae</taxon>
        <taxon>Staphylococcus</taxon>
    </lineage>
</organism>
<sequence length="72" mass="8752">MAVFKVFYQHNRDEVIVRENTQSLYVEAQTEEQVRRYLKDRNFNIEFITKLEGAHLDYEKENSEHFNVEIAK</sequence>
<gene>
    <name evidence="1" type="primary">rpoY</name>
    <name type="ordered locus">SAR1064</name>
</gene>